<sequence>MPDLLLLGLIGALTLLLLLTLLAFAGYSGLLTGVTVSAGSPPIRNITVAYKFHVGSYGDTGHLFTESCSISPKLRSIAVYYDNPHTVPPEKCRCAVGSILSEGEESPSPELIHLYQKFGFKIFSFPAPSHVVIATFPYTTPISIWLAARRVHPALDTYIKERKLCAHPRLEIYHQDKIHFMCPLARQGDFYVPEVKETERKCRELAEATDTQTDGTGADTSDASSVSLDVRPGSRETSATTLSPGAGNRGWDDGDNRSEHSYSESGASGSSFEELDLEGEGPLGEPRLNPEAKLLGPPRELSTPERGEE</sequence>
<comment type="function">
    <text evidence="1">Major reticulophagy (also called ER-phagy) receptor that acts independently of other candidate reticulophagy receptors to remodel subdomains of the endoplasmic reticulum into autophagosomes upon nutrient stress, which then fuse with lysosomes for endoplasmic reticulum turnover. The ATG8-containing isolation membrane (IM) cradles a tubular segment of TEX264-positive ER near a three-way junction, allowing the formation of a synapse of 2 juxtaposed membranes with trans interaction between the TEX264 and ATG8 proteins. Expansion of the IM would extend the capture of ER, possibly through a 'zipper-like' process involving continued trans TEX264-ATG8 interactions, until poorly understood mechanisms lead to the fission of relevant membranes and, ultimately, autophagosomal membrane closure. Also involved in the repair of covalent DNA-protein cross-links (DPCs) during DNA synthesis: acts by bridging VCP/p97 to covalent DNA-protein cross-links (DPCs) and initiating resolution of DPCs by SPRTN.</text>
</comment>
<comment type="subunit">
    <text evidence="1">Interacts (via the LIR motif) with ATG8 family proteins MAP1LC3A, MAP1LC3B, GABARAP and GABARAPL1. Interacts with VCP/p97; bridging VCP/p97 to covalent DNA-protein cross-links (DPCs). Interacts with TOP1 (when sumoylated).</text>
</comment>
<comment type="subcellular location">
    <subcellularLocation>
        <location evidence="1">Endoplasmic reticulum membrane</location>
        <topology evidence="1">Single-pass type III membrane protein</topology>
    </subcellularLocation>
    <subcellularLocation>
        <location evidence="1">Cytoplasmic vesicle</location>
        <location evidence="1">Autophagosome</location>
    </subcellularLocation>
    <subcellularLocation>
        <location evidence="1">Cytoplasm</location>
        <location evidence="1">Cytosol</location>
    </subcellularLocation>
    <subcellularLocation>
        <location evidence="1">Nucleus</location>
    </subcellularLocation>
    <subcellularLocation>
        <location evidence="1">Chromosome</location>
    </subcellularLocation>
    <text evidence="1">Is trafficked from tubular ER to growing autophagosomes via its cytosolic LIR motif. Also found in the cytosol, nucleus and chromatin. In response to formation of covalent DNA-protein cross-links (DPCs), localizes to the nuclear periphery, and associates with DNA replication forks.</text>
</comment>
<comment type="alternative products">
    <event type="alternative splicing"/>
    <isoform>
        <id>E9Q137-1</id>
        <name>1</name>
        <sequence type="displayed"/>
    </isoform>
    <isoform>
        <id>E9Q137-2</id>
        <name>2</name>
        <sequence type="described" ref="VSP_060780"/>
    </isoform>
</comment>
<comment type="domain">
    <text evidence="1">The LIR motif in the cytosol-facing C-terminal region is involved in the interaction with ATG8 proteins.</text>
</comment>
<comment type="domain">
    <text evidence="1">The disordered region is required for autophagosome binding and reticulophagy, probably via bridging the long distance between endoplasmic reticulum and autophagosome membranes, because ribosomes exist on endoplasmic reticulum membranes that attach to autophagic membranes.</text>
</comment>
<protein>
    <recommendedName>
        <fullName evidence="4">Testis-expressed protein 264 homolog</fullName>
    </recommendedName>
</protein>
<reference key="1">
    <citation type="journal article" date="2005" name="Science">
        <title>The transcriptional landscape of the mammalian genome.</title>
        <authorList>
            <person name="Carninci P."/>
            <person name="Kasukawa T."/>
            <person name="Katayama S."/>
            <person name="Gough J."/>
            <person name="Frith M.C."/>
            <person name="Maeda N."/>
            <person name="Oyama R."/>
            <person name="Ravasi T."/>
            <person name="Lenhard B."/>
            <person name="Wells C."/>
            <person name="Kodzius R."/>
            <person name="Shimokawa K."/>
            <person name="Bajic V.B."/>
            <person name="Brenner S.E."/>
            <person name="Batalov S."/>
            <person name="Forrest A.R."/>
            <person name="Zavolan M."/>
            <person name="Davis M.J."/>
            <person name="Wilming L.G."/>
            <person name="Aidinis V."/>
            <person name="Allen J.E."/>
            <person name="Ambesi-Impiombato A."/>
            <person name="Apweiler R."/>
            <person name="Aturaliya R.N."/>
            <person name="Bailey T.L."/>
            <person name="Bansal M."/>
            <person name="Baxter L."/>
            <person name="Beisel K.W."/>
            <person name="Bersano T."/>
            <person name="Bono H."/>
            <person name="Chalk A.M."/>
            <person name="Chiu K.P."/>
            <person name="Choudhary V."/>
            <person name="Christoffels A."/>
            <person name="Clutterbuck D.R."/>
            <person name="Crowe M.L."/>
            <person name="Dalla E."/>
            <person name="Dalrymple B.P."/>
            <person name="de Bono B."/>
            <person name="Della Gatta G."/>
            <person name="di Bernardo D."/>
            <person name="Down T."/>
            <person name="Engstrom P."/>
            <person name="Fagiolini M."/>
            <person name="Faulkner G."/>
            <person name="Fletcher C.F."/>
            <person name="Fukushima T."/>
            <person name="Furuno M."/>
            <person name="Futaki S."/>
            <person name="Gariboldi M."/>
            <person name="Georgii-Hemming P."/>
            <person name="Gingeras T.R."/>
            <person name="Gojobori T."/>
            <person name="Green R.E."/>
            <person name="Gustincich S."/>
            <person name="Harbers M."/>
            <person name="Hayashi Y."/>
            <person name="Hensch T.K."/>
            <person name="Hirokawa N."/>
            <person name="Hill D."/>
            <person name="Huminiecki L."/>
            <person name="Iacono M."/>
            <person name="Ikeo K."/>
            <person name="Iwama A."/>
            <person name="Ishikawa T."/>
            <person name="Jakt M."/>
            <person name="Kanapin A."/>
            <person name="Katoh M."/>
            <person name="Kawasawa Y."/>
            <person name="Kelso J."/>
            <person name="Kitamura H."/>
            <person name="Kitano H."/>
            <person name="Kollias G."/>
            <person name="Krishnan S.P."/>
            <person name="Kruger A."/>
            <person name="Kummerfeld S.K."/>
            <person name="Kurochkin I.V."/>
            <person name="Lareau L.F."/>
            <person name="Lazarevic D."/>
            <person name="Lipovich L."/>
            <person name="Liu J."/>
            <person name="Liuni S."/>
            <person name="McWilliam S."/>
            <person name="Madan Babu M."/>
            <person name="Madera M."/>
            <person name="Marchionni L."/>
            <person name="Matsuda H."/>
            <person name="Matsuzawa S."/>
            <person name="Miki H."/>
            <person name="Mignone F."/>
            <person name="Miyake S."/>
            <person name="Morris K."/>
            <person name="Mottagui-Tabar S."/>
            <person name="Mulder N."/>
            <person name="Nakano N."/>
            <person name="Nakauchi H."/>
            <person name="Ng P."/>
            <person name="Nilsson R."/>
            <person name="Nishiguchi S."/>
            <person name="Nishikawa S."/>
            <person name="Nori F."/>
            <person name="Ohara O."/>
            <person name="Okazaki Y."/>
            <person name="Orlando V."/>
            <person name="Pang K.C."/>
            <person name="Pavan W.J."/>
            <person name="Pavesi G."/>
            <person name="Pesole G."/>
            <person name="Petrovsky N."/>
            <person name="Piazza S."/>
            <person name="Reed J."/>
            <person name="Reid J.F."/>
            <person name="Ring B.Z."/>
            <person name="Ringwald M."/>
            <person name="Rost B."/>
            <person name="Ruan Y."/>
            <person name="Salzberg S.L."/>
            <person name="Sandelin A."/>
            <person name="Schneider C."/>
            <person name="Schoenbach C."/>
            <person name="Sekiguchi K."/>
            <person name="Semple C.A."/>
            <person name="Seno S."/>
            <person name="Sessa L."/>
            <person name="Sheng Y."/>
            <person name="Shibata Y."/>
            <person name="Shimada H."/>
            <person name="Shimada K."/>
            <person name="Silva D."/>
            <person name="Sinclair B."/>
            <person name="Sperling S."/>
            <person name="Stupka E."/>
            <person name="Sugiura K."/>
            <person name="Sultana R."/>
            <person name="Takenaka Y."/>
            <person name="Taki K."/>
            <person name="Tammoja K."/>
            <person name="Tan S.L."/>
            <person name="Tang S."/>
            <person name="Taylor M.S."/>
            <person name="Tegner J."/>
            <person name="Teichmann S.A."/>
            <person name="Ueda H.R."/>
            <person name="van Nimwegen E."/>
            <person name="Verardo R."/>
            <person name="Wei C.L."/>
            <person name="Yagi K."/>
            <person name="Yamanishi H."/>
            <person name="Zabarovsky E."/>
            <person name="Zhu S."/>
            <person name="Zimmer A."/>
            <person name="Hide W."/>
            <person name="Bult C."/>
            <person name="Grimmond S.M."/>
            <person name="Teasdale R.D."/>
            <person name="Liu E.T."/>
            <person name="Brusic V."/>
            <person name="Quackenbush J."/>
            <person name="Wahlestedt C."/>
            <person name="Mattick J.S."/>
            <person name="Hume D.A."/>
            <person name="Kai C."/>
            <person name="Sasaki D."/>
            <person name="Tomaru Y."/>
            <person name="Fukuda S."/>
            <person name="Kanamori-Katayama M."/>
            <person name="Suzuki M."/>
            <person name="Aoki J."/>
            <person name="Arakawa T."/>
            <person name="Iida J."/>
            <person name="Imamura K."/>
            <person name="Itoh M."/>
            <person name="Kato T."/>
            <person name="Kawaji H."/>
            <person name="Kawagashira N."/>
            <person name="Kawashima T."/>
            <person name="Kojima M."/>
            <person name="Kondo S."/>
            <person name="Konno H."/>
            <person name="Nakano K."/>
            <person name="Ninomiya N."/>
            <person name="Nishio T."/>
            <person name="Okada M."/>
            <person name="Plessy C."/>
            <person name="Shibata K."/>
            <person name="Shiraki T."/>
            <person name="Suzuki S."/>
            <person name="Tagami M."/>
            <person name="Waki K."/>
            <person name="Watahiki A."/>
            <person name="Okamura-Oho Y."/>
            <person name="Suzuki H."/>
            <person name="Kawai J."/>
            <person name="Hayashizaki Y."/>
        </authorList>
    </citation>
    <scope>NUCLEOTIDE SEQUENCE [LARGE SCALE MRNA] (ISOFORM 2)</scope>
    <source>
        <strain>C57BL/6J</strain>
        <tissue evidence="7">Tongue</tissue>
        <tissue evidence="8">Visual cortex</tissue>
    </source>
</reference>
<reference key="2">
    <citation type="journal article" date="2009" name="PLoS Biol.">
        <title>Lineage-specific biology revealed by a finished genome assembly of the mouse.</title>
        <authorList>
            <person name="Church D.M."/>
            <person name="Goodstadt L."/>
            <person name="Hillier L.W."/>
            <person name="Zody M.C."/>
            <person name="Goldstein S."/>
            <person name="She X."/>
            <person name="Bult C.J."/>
            <person name="Agarwala R."/>
            <person name="Cherry J.L."/>
            <person name="DiCuccio M."/>
            <person name="Hlavina W."/>
            <person name="Kapustin Y."/>
            <person name="Meric P."/>
            <person name="Maglott D."/>
            <person name="Birtle Z."/>
            <person name="Marques A.C."/>
            <person name="Graves T."/>
            <person name="Zhou S."/>
            <person name="Teague B."/>
            <person name="Potamousis K."/>
            <person name="Churas C."/>
            <person name="Place M."/>
            <person name="Herschleb J."/>
            <person name="Runnheim R."/>
            <person name="Forrest D."/>
            <person name="Amos-Landgraf J."/>
            <person name="Schwartz D.C."/>
            <person name="Cheng Z."/>
            <person name="Lindblad-Toh K."/>
            <person name="Eichler E.E."/>
            <person name="Ponting C.P."/>
        </authorList>
    </citation>
    <scope>NUCLEOTIDE SEQUENCE [LARGE SCALE GENOMIC DNA]</scope>
    <source>
        <strain>C57BL/6J</strain>
    </source>
</reference>
<reference key="3">
    <citation type="journal article" date="2004" name="Genome Res.">
        <title>The status, quality, and expansion of the NIH full-length cDNA project: the Mammalian Gene Collection (MGC).</title>
        <authorList>
            <consortium name="The MGC Project Team"/>
        </authorList>
    </citation>
    <scope>NUCLEOTIDE SEQUENCE [LARGE SCALE MRNA]</scope>
    <source>
        <strain evidence="5">Czech II</strain>
        <strain evidence="6">FVB/N</strain>
    </source>
</reference>
<organism>
    <name type="scientific">Mus musculus</name>
    <name type="common">Mouse</name>
    <dbReference type="NCBI Taxonomy" id="10090"/>
    <lineage>
        <taxon>Eukaryota</taxon>
        <taxon>Metazoa</taxon>
        <taxon>Chordata</taxon>
        <taxon>Craniata</taxon>
        <taxon>Vertebrata</taxon>
        <taxon>Euteleostomi</taxon>
        <taxon>Mammalia</taxon>
        <taxon>Eutheria</taxon>
        <taxon>Euarchontoglires</taxon>
        <taxon>Glires</taxon>
        <taxon>Rodentia</taxon>
        <taxon>Myomorpha</taxon>
        <taxon>Muroidea</taxon>
        <taxon>Muridae</taxon>
        <taxon>Murinae</taxon>
        <taxon>Mus</taxon>
        <taxon>Mus</taxon>
    </lineage>
</organism>
<gene>
    <name evidence="9" type="primary">Tex264</name>
</gene>
<evidence type="ECO:0000250" key="1">
    <source>
        <dbReference type="UniProtKB" id="Q9Y6I9"/>
    </source>
</evidence>
<evidence type="ECO:0000255" key="2"/>
<evidence type="ECO:0000256" key="3">
    <source>
        <dbReference type="SAM" id="MobiDB-lite"/>
    </source>
</evidence>
<evidence type="ECO:0000305" key="4"/>
<evidence type="ECO:0000312" key="5">
    <source>
        <dbReference type="EMBL" id="AAH02248.1"/>
    </source>
</evidence>
<evidence type="ECO:0000312" key="6">
    <source>
        <dbReference type="EMBL" id="AAH06608.1"/>
    </source>
</evidence>
<evidence type="ECO:0000312" key="7">
    <source>
        <dbReference type="EMBL" id="BAB26219.1"/>
    </source>
</evidence>
<evidence type="ECO:0000312" key="8">
    <source>
        <dbReference type="EMBL" id="BAE34782.1"/>
    </source>
</evidence>
<evidence type="ECO:0000312" key="9">
    <source>
        <dbReference type="MGI" id="MGI:1096570"/>
    </source>
</evidence>
<proteinExistence type="evidence at transcript level"/>
<feature type="chain" id="PRO_0000451419" description="Testis-expressed protein 264 homolog">
    <location>
        <begin position="1"/>
        <end position="309"/>
    </location>
</feature>
<feature type="topological domain" description="Lumenal" evidence="4">
    <location>
        <begin position="1"/>
        <end position="3"/>
    </location>
</feature>
<feature type="transmembrane region" description="Helical; Signal-anchor for type III membrane protein" evidence="2">
    <location>
        <begin position="4"/>
        <end position="24"/>
    </location>
</feature>
<feature type="topological domain" description="Cytoplasmic" evidence="4">
    <location>
        <begin position="25"/>
        <end position="309"/>
    </location>
</feature>
<feature type="region of interest" description="Disordered" evidence="1">
    <location>
        <begin position="193"/>
        <end position="309"/>
    </location>
</feature>
<feature type="short sequence motif" description="LIR motif" evidence="1">
    <location>
        <begin position="272"/>
        <end position="275"/>
    </location>
</feature>
<feature type="compositionally biased region" description="Low complexity" evidence="3">
    <location>
        <begin position="208"/>
        <end position="225"/>
    </location>
</feature>
<feature type="compositionally biased region" description="Basic and acidic residues" evidence="3">
    <location>
        <begin position="250"/>
        <end position="262"/>
    </location>
</feature>
<feature type="compositionally biased region" description="Low complexity" evidence="3">
    <location>
        <begin position="263"/>
        <end position="272"/>
    </location>
</feature>
<feature type="modified residue" description="Phosphoserine" evidence="1">
    <location>
        <position position="238"/>
    </location>
</feature>
<feature type="modified residue" description="Phosphoserine" evidence="1">
    <location>
        <position position="243"/>
    </location>
</feature>
<feature type="splice variant" id="VSP_060780" description="In isoform 2.">
    <location>
        <begin position="162"/>
        <end position="199"/>
    </location>
</feature>
<feature type="sequence conflict" description="In Ref. 1; BAB26219." evidence="4" ref="1">
    <original>S</original>
    <variation>V</variation>
    <location>
        <position position="56"/>
    </location>
</feature>
<feature type="sequence conflict" description="In Ref. 3; AAH02248/AAH06608." evidence="4" ref="3">
    <original>H</original>
    <variation>Q</variation>
    <location>
        <position position="174"/>
    </location>
</feature>
<dbReference type="EMBL" id="AK009326">
    <property type="protein sequence ID" value="BAB26219.1"/>
    <property type="molecule type" value="mRNA"/>
</dbReference>
<dbReference type="EMBL" id="AK159046">
    <property type="protein sequence ID" value="BAE34782.1"/>
    <property type="molecule type" value="mRNA"/>
</dbReference>
<dbReference type="EMBL" id="AC125188">
    <property type="status" value="NOT_ANNOTATED_CDS"/>
    <property type="molecule type" value="Genomic_DNA"/>
</dbReference>
<dbReference type="EMBL" id="BC002248">
    <property type="protein sequence ID" value="AAH02248.1"/>
    <property type="molecule type" value="mRNA"/>
</dbReference>
<dbReference type="EMBL" id="BC006608">
    <property type="protein sequence ID" value="AAH06608.1"/>
    <property type="molecule type" value="mRNA"/>
</dbReference>
<dbReference type="CCDS" id="CCDS23483.1">
    <molecule id="E9Q137-1"/>
</dbReference>
<dbReference type="RefSeq" id="NP_001075123.1">
    <molecule id="E9Q137-1"/>
    <property type="nucleotide sequence ID" value="NM_001081654.2"/>
</dbReference>
<dbReference type="RefSeq" id="NP_001273427.1">
    <molecule id="E9Q137-1"/>
    <property type="nucleotide sequence ID" value="NM_001286498.1"/>
</dbReference>
<dbReference type="RefSeq" id="NP_035703.2">
    <molecule id="E9Q137-1"/>
    <property type="nucleotide sequence ID" value="NM_011573.3"/>
</dbReference>
<dbReference type="FunCoup" id="E9Q137">
    <property type="interactions" value="1697"/>
</dbReference>
<dbReference type="STRING" id="10090.ENSMUSP00000132247"/>
<dbReference type="iPTMnet" id="E9Q137"/>
<dbReference type="PhosphoSitePlus" id="E9Q137"/>
<dbReference type="SwissPalm" id="E9Q137"/>
<dbReference type="jPOST" id="E9Q137"/>
<dbReference type="PaxDb" id="10090-ENSMUSP00000132247"/>
<dbReference type="PeptideAtlas" id="E9Q137"/>
<dbReference type="ProteomicsDB" id="342775">
    <molecule id="E9Q137-1"/>
</dbReference>
<dbReference type="Antibodypedia" id="2567">
    <property type="antibodies" value="93 antibodies from 18 providers"/>
</dbReference>
<dbReference type="Ensembl" id="ENSMUST00000046735.11">
    <molecule id="E9Q137-1"/>
    <property type="protein sequence ID" value="ENSMUSP00000044654.5"/>
    <property type="gene ID" value="ENSMUSG00000040813.17"/>
</dbReference>
<dbReference type="Ensembl" id="ENSMUST00000163441.8">
    <molecule id="E9Q137-1"/>
    <property type="protein sequence ID" value="ENSMUSP00000132247.2"/>
    <property type="gene ID" value="ENSMUSG00000040813.17"/>
</dbReference>
<dbReference type="Ensembl" id="ENSMUST00000169068.8">
    <molecule id="E9Q137-1"/>
    <property type="protein sequence ID" value="ENSMUSP00000133194.3"/>
    <property type="gene ID" value="ENSMUSG00000040813.17"/>
</dbReference>
<dbReference type="GeneID" id="21767"/>
<dbReference type="KEGG" id="mmu:21767"/>
<dbReference type="UCSC" id="uc009rkk.2">
    <molecule id="E9Q137-1"/>
    <property type="organism name" value="mouse"/>
</dbReference>
<dbReference type="AGR" id="MGI:1096570"/>
<dbReference type="CTD" id="51368"/>
<dbReference type="MGI" id="MGI:1096570">
    <property type="gene designation" value="Tex264"/>
</dbReference>
<dbReference type="VEuPathDB" id="HostDB:ENSMUSG00000040813"/>
<dbReference type="eggNOG" id="ENOG502S3D1">
    <property type="taxonomic scope" value="Eukaryota"/>
</dbReference>
<dbReference type="GeneTree" id="ENSGT00390000016901"/>
<dbReference type="HOGENOM" id="CLU_077435_0_0_1"/>
<dbReference type="InParanoid" id="E9Q137"/>
<dbReference type="OMA" id="GPYKECG"/>
<dbReference type="OrthoDB" id="2140079at2759"/>
<dbReference type="PhylomeDB" id="E9Q137"/>
<dbReference type="TreeFam" id="TF328465"/>
<dbReference type="Reactome" id="R-MMU-114608">
    <property type="pathway name" value="Platelet degranulation"/>
</dbReference>
<dbReference type="BioGRID-ORCS" id="21767">
    <property type="hits" value="2 hits in 77 CRISPR screens"/>
</dbReference>
<dbReference type="PRO" id="PR:E9Q137"/>
<dbReference type="Proteomes" id="UP000000589">
    <property type="component" value="Chromosome 9"/>
</dbReference>
<dbReference type="RNAct" id="E9Q137">
    <property type="molecule type" value="protein"/>
</dbReference>
<dbReference type="Bgee" id="ENSMUSG00000040813">
    <property type="expression patterns" value="Expressed in placenta labyrinth and 252 other cell types or tissues"/>
</dbReference>
<dbReference type="GO" id="GO:0000421">
    <property type="term" value="C:autophagosome membrane"/>
    <property type="evidence" value="ECO:0000314"/>
    <property type="project" value="MGI"/>
</dbReference>
<dbReference type="GO" id="GO:0031410">
    <property type="term" value="C:cytoplasmic vesicle"/>
    <property type="evidence" value="ECO:0007669"/>
    <property type="project" value="UniProtKB-KW"/>
</dbReference>
<dbReference type="GO" id="GO:0005829">
    <property type="term" value="C:cytosol"/>
    <property type="evidence" value="ECO:0000250"/>
    <property type="project" value="UniProtKB"/>
</dbReference>
<dbReference type="GO" id="GO:0005783">
    <property type="term" value="C:endoplasmic reticulum"/>
    <property type="evidence" value="ECO:0000314"/>
    <property type="project" value="MGI"/>
</dbReference>
<dbReference type="GO" id="GO:0005789">
    <property type="term" value="C:endoplasmic reticulum membrane"/>
    <property type="evidence" value="ECO:0007669"/>
    <property type="project" value="UniProtKB-SubCell"/>
</dbReference>
<dbReference type="GO" id="GO:0005634">
    <property type="term" value="C:nucleus"/>
    <property type="evidence" value="ECO:0000250"/>
    <property type="project" value="UniProtKB"/>
</dbReference>
<dbReference type="GO" id="GO:0005657">
    <property type="term" value="C:replication fork"/>
    <property type="evidence" value="ECO:0000250"/>
    <property type="project" value="UniProtKB"/>
</dbReference>
<dbReference type="GO" id="GO:0038023">
    <property type="term" value="F:signaling receptor activity"/>
    <property type="evidence" value="ECO:0000266"/>
    <property type="project" value="MGI"/>
</dbReference>
<dbReference type="GO" id="GO:0106300">
    <property type="term" value="P:protein-DNA covalent cross-linking repair"/>
    <property type="evidence" value="ECO:0000250"/>
    <property type="project" value="UniProtKB"/>
</dbReference>
<dbReference type="GO" id="GO:0061709">
    <property type="term" value="P:reticulophagy"/>
    <property type="evidence" value="ECO:0000266"/>
    <property type="project" value="MGI"/>
</dbReference>
<dbReference type="Gene3D" id="3.20.80.10">
    <property type="entry name" value="Regulatory factor, effector binding domain"/>
    <property type="match status" value="1"/>
</dbReference>
<dbReference type="InterPro" id="IPR011256">
    <property type="entry name" value="Reg_factor_effector_dom_sf"/>
</dbReference>
<dbReference type="PANTHER" id="PTHR15949">
    <property type="entry name" value="TESTIS-EXPRESSED PROTEIN 264"/>
    <property type="match status" value="1"/>
</dbReference>
<dbReference type="PANTHER" id="PTHR15949:SF3">
    <property type="entry name" value="TESTIS-EXPRESSED PROTEIN 264"/>
    <property type="match status" value="1"/>
</dbReference>
<dbReference type="SUPFAM" id="SSF55136">
    <property type="entry name" value="Probable bacterial effector-binding domain"/>
    <property type="match status" value="1"/>
</dbReference>
<keyword id="KW-0025">Alternative splicing</keyword>
<keyword id="KW-0072">Autophagy</keyword>
<keyword id="KW-0158">Chromosome</keyword>
<keyword id="KW-0963">Cytoplasm</keyword>
<keyword id="KW-0968">Cytoplasmic vesicle</keyword>
<keyword id="KW-0227">DNA damage</keyword>
<keyword id="KW-0234">DNA repair</keyword>
<keyword id="KW-0256">Endoplasmic reticulum</keyword>
<keyword id="KW-0472">Membrane</keyword>
<keyword id="KW-0539">Nucleus</keyword>
<keyword id="KW-0597">Phosphoprotein</keyword>
<keyword id="KW-1185">Reference proteome</keyword>
<keyword id="KW-0812">Transmembrane</keyword>
<keyword id="KW-1133">Transmembrane helix</keyword>
<name>TX264_MOUSE</name>
<accession>E9Q137</accession>
<accession>Q3TXY2</accession>
<accession>Q99LS5</accession>
<accession>Q9D7D9</accession>